<sequence>MEVGLNEFLDMKKRYEDFKMKNKREPRYVTTKNGYKVMLPVFKDMLRRYEDFVRINGREPNYISIQPQPNGKIEIKKFRDMLRRYEDFVRINGREPNIIYLEQGKSDHVSLGTFKDMLRRYKDFVRINGREPNYISIQPQPSLKGHWTTKVIEKIGTFHDATSLYERVKKTCKYKYYYNDQVPNHVAVMRMTTSGINCTDACQLFSKVLEEMGYEVKIEHVRVKCNDGKWYGHYLLRVGGFELKDGTIWDYVSATKTGRPLGVPCCTAGFQHLGWGIVGPVYDK</sequence>
<organism>
    <name type="scientific">Methanothermobacter phage psiM100</name>
    <dbReference type="NCBI Taxonomy" id="173824"/>
    <lineage>
        <taxon>Viruses</taxon>
        <taxon>Duplodnaviria</taxon>
        <taxon>Heunggongvirae</taxon>
        <taxon>Uroviricota</taxon>
        <taxon>Caudoviricetes</taxon>
        <taxon>Methanobavirales</taxon>
        <taxon>Leisingerviridae</taxon>
        <taxon>Psimunavirus</taxon>
    </lineage>
</organism>
<accession>Q7LYX0</accession>
<protein>
    <recommendedName>
        <fullName evidence="10">Pseudomurein endoisopeptidase PeiW</fullName>
        <shortName evidence="6">Pei</shortName>
        <ecNumber evidence="2 3 5">3.4.22.-</ecNumber>
    </recommendedName>
    <alternativeName>
        <fullName evidence="7">Endolysin</fullName>
    </alternativeName>
    <alternativeName>
        <fullName>Lytic enzyme PeiW</fullName>
    </alternativeName>
</protein>
<evidence type="ECO:0000269" key="1">
    <source>
    </source>
</evidence>
<evidence type="ECO:0000269" key="2">
    <source>
    </source>
</evidence>
<evidence type="ECO:0000269" key="3">
    <source>
    </source>
</evidence>
<evidence type="ECO:0000269" key="4">
    <source>
    </source>
</evidence>
<evidence type="ECO:0000269" key="5">
    <source>
    </source>
</evidence>
<evidence type="ECO:0000303" key="6">
    <source>
    </source>
</evidence>
<evidence type="ECO:0000305" key="7"/>
<evidence type="ECO:0000305" key="8">
    <source>
    </source>
</evidence>
<evidence type="ECO:0000305" key="9">
    <source>
    </source>
</evidence>
<evidence type="ECO:0000312" key="10">
    <source>
        <dbReference type="EMBL" id="AAG39976.1"/>
    </source>
</evidence>
<dbReference type="EC" id="3.4.22.-" evidence="2 3 5"/>
<dbReference type="EMBL" id="AF301375">
    <property type="protein sequence ID" value="AAG39976.1"/>
    <property type="molecule type" value="Genomic_DNA"/>
</dbReference>
<dbReference type="RefSeq" id="NP_071837.1">
    <property type="nucleotide sequence ID" value="NC_002628.3"/>
</dbReference>
<dbReference type="PDB" id="8JX4">
    <property type="method" value="X-ray"/>
    <property type="resolution" value="2.30 A"/>
    <property type="chains" value="A/B/C/D=138-284"/>
</dbReference>
<dbReference type="PDBsum" id="8JX4"/>
<dbReference type="SMR" id="Q7LYX0"/>
<dbReference type="MEROPS" id="C71.001"/>
<dbReference type="GeneID" id="26066938"/>
<dbReference type="KEGG" id="vg:26066938"/>
<dbReference type="Proteomes" id="UP000002579">
    <property type="component" value="Genome"/>
</dbReference>
<dbReference type="GO" id="GO:0008233">
    <property type="term" value="F:peptidase activity"/>
    <property type="evidence" value="ECO:0007669"/>
    <property type="project" value="UniProtKB-KW"/>
</dbReference>
<dbReference type="GO" id="GO:0042742">
    <property type="term" value="P:defense response to bacterium"/>
    <property type="evidence" value="ECO:0007669"/>
    <property type="project" value="UniProtKB-KW"/>
</dbReference>
<dbReference type="GO" id="GO:0031640">
    <property type="term" value="P:killing of cells of another organism"/>
    <property type="evidence" value="ECO:0007669"/>
    <property type="project" value="UniProtKB-KW"/>
</dbReference>
<dbReference type="GO" id="GO:0006508">
    <property type="term" value="P:proteolysis"/>
    <property type="evidence" value="ECO:0007669"/>
    <property type="project" value="UniProtKB-KW"/>
</dbReference>
<dbReference type="InterPro" id="IPR022119">
    <property type="entry name" value="Peptidase_C71"/>
</dbReference>
<dbReference type="InterPro" id="IPR018975">
    <property type="entry name" value="Pseudomurein-binding_repeat"/>
</dbReference>
<dbReference type="Pfam" id="PF12386">
    <property type="entry name" value="Peptidase_C71"/>
    <property type="match status" value="1"/>
</dbReference>
<dbReference type="Pfam" id="PF09373">
    <property type="entry name" value="PMBR"/>
    <property type="match status" value="4"/>
</dbReference>
<gene>
    <name type="primary">peiW</name>
    <name evidence="6" type="ORF">ORF28</name>
</gene>
<comment type="function">
    <text evidence="1 2">Cysteine protease that cleaves the cell wall of its host methanogen under hydrogen limitation of the latter (autolysis) (PubMed:11544247, PubMed:11934493). Cleaves the epsilon-Ala-Lys isopeptide bond in the oligopeptides of pseudomurein (PubMed:11934493).</text>
</comment>
<comment type="cofactor">
    <cofactor evidence="2">
        <name>Ca(2+)</name>
        <dbReference type="ChEBI" id="CHEBI:29108"/>
    </cofactor>
    <cofactor evidence="2">
        <name>Mg(2+)</name>
        <dbReference type="ChEBI" id="CHEBI:18420"/>
    </cofactor>
    <text evidence="5 8">Need a divalent cation like Activated by Ca(2+)&gt;Mn(2+)&gt;Mg(2+).</text>
</comment>
<comment type="biophysicochemical properties">
    <kinetics>
        <KM evidence="5">6.25 mM for synthetic peptide H-Glu-Ala-pNA</KM>
    </kinetics>
    <phDependence>
        <text evidence="2">Optimum pH is 6.4.</text>
    </phDependence>
    <temperatureDependence>
        <text evidence="2">Optimum temperature is 63 degrees Celsius.</text>
    </temperatureDependence>
</comment>
<comment type="subunit">
    <text evidence="9">Monomer.</text>
</comment>
<comment type="domain">
    <text evidence="3">The N-terminus contains a cell wall binding domain (PubMed:17427286). The endoisopeptidase domain is at the C-terminus (PubMed:17427286).</text>
</comment>
<comment type="miscellaneous">
    <text evidence="4">PsiM100 is a defective prophage of methanothermobacter wolfei.</text>
</comment>
<comment type="similarity">
    <text evidence="7">Belongs to the Psimunavirus Pseudomurein endoisopeptidase family.</text>
</comment>
<keyword id="KW-0002">3D-structure</keyword>
<keyword id="KW-0929">Antimicrobial</keyword>
<keyword id="KW-0081">Bacteriolytic enzyme</keyword>
<keyword id="KW-0204">Cytolysis</keyword>
<keyword id="KW-0578">Host cell lysis by virus</keyword>
<keyword id="KW-0378">Hydrolase</keyword>
<keyword id="KW-0645">Protease</keyword>
<keyword id="KW-1185">Reference proteome</keyword>
<keyword id="KW-1188">Viral release from host cell</keyword>
<reference key="1">
    <citation type="journal article" date="2001" name="J. Bacteriol.">
        <title>The genome of archaeal prophage PsiM100 encodes the lytic enzyme responsible for autolysis of Methanothermobacter wolfeii.</title>
        <authorList>
            <person name="Luo Y."/>
            <person name="Pfister P."/>
            <person name="Leisinger T."/>
            <person name="Wasserfallen A."/>
        </authorList>
    </citation>
    <scope>NUCLEOTIDE SEQUENCE</scope>
    <scope>FUNCTION</scope>
</reference>
<reference key="2">
    <citation type="journal article" date="2002" name="FEMS Microbiol. Lett.">
        <title>Pseudomurein endoisopeptidases PeiW and PeiP, two moderately related members of a novel family of proteases produced in Methanothermobacter strains.</title>
        <authorList>
            <person name="Luo Y."/>
            <person name="Pfister P."/>
            <person name="Leisinger T."/>
            <person name="Wasserfallen A."/>
        </authorList>
    </citation>
    <scope>FUNCTION</scope>
    <scope>CATALYTIC ACTIVITY</scope>
    <scope>BIOPHYSICOCHEMICAL PROPERTIES</scope>
    <scope>COFACTOR</scope>
</reference>
<reference key="3">
    <citation type="journal article" date="2006" name="Mol. Microbiol.">
        <title>Identification of pseudomurein cell wall binding domains.</title>
        <authorList>
            <person name="Steenbakkers P.J."/>
            <person name="Geerts W.J."/>
            <person name="Ayman-Oz N.A."/>
            <person name="Keltjens J.T."/>
        </authorList>
    </citation>
    <scope>DOMAIN</scope>
    <scope>CATALYTIC ACTIVITY</scope>
</reference>
<reference key="4">
    <citation type="journal article" date="2010" name="Archaea">
        <title>Two major archaeal pseudomurein endoisopeptidases: PeiW and PeiP.</title>
        <authorList>
            <person name="Visweswaran G.R."/>
            <person name="Dijkstra B.W."/>
            <person name="Kok J."/>
        </authorList>
    </citation>
    <scope>REVIEW</scope>
</reference>
<reference key="5">
    <citation type="journal article" date="2015" name="Archaea">
        <title>Biochemical Characterisation of Phage Pseudomurein Endoisopeptidases PeiW and PeiP Using Synthetic Peptides.</title>
        <authorList>
            <person name="Schofield L.R."/>
            <person name="Beattie A.K."/>
            <person name="Tootill C.M."/>
            <person name="Dey D."/>
            <person name="Ronimus R.S."/>
        </authorList>
    </citation>
    <scope>CATALYTIC ACTIVITY</scope>
    <scope>SUBUNIT</scope>
    <scope>COFACTOR</scope>
    <scope>BIOPHYSICOCHEMICAL PROPERTIES</scope>
</reference>
<name>ENLYS_BPM10</name>
<proteinExistence type="evidence at protein level"/>
<feature type="chain" id="PRO_0000461071" description="Pseudomurein endoisopeptidase PeiW">
    <location>
        <begin position="1"/>
        <end position="284"/>
    </location>
</feature>
<feature type="region of interest" description="Pseudomurein-binding repeat" evidence="3">
    <location>
        <begin position="4"/>
        <end position="31"/>
    </location>
</feature>
<feature type="region of interest" description="Pseudomurein-binding repeat" evidence="3">
    <location>
        <begin position="34"/>
        <end position="65"/>
    </location>
</feature>
<feature type="region of interest" description="Pseudomurein-binding repeat" evidence="3">
    <location>
        <begin position="70"/>
        <end position="100"/>
    </location>
</feature>
<feature type="region of interest" description="Pseudomurein-binding repeat" evidence="3">
    <location>
        <begin position="106"/>
        <end position="137"/>
    </location>
</feature>
<feature type="active site" evidence="8">
    <location>
        <position position="198"/>
    </location>
</feature>
<feature type="active site" evidence="8">
    <location>
        <position position="233"/>
    </location>
</feature>
<feature type="active site" evidence="8">
    <location>
        <position position="250"/>
    </location>
</feature>